<gene>
    <name evidence="1" type="primary">pelA</name>
    <name type="ordered locus">PAE3287</name>
</gene>
<keyword id="KW-0963">Cytoplasm</keyword>
<keyword id="KW-0255">Endonuclease</keyword>
<keyword id="KW-0378">Hydrolase</keyword>
<keyword id="KW-0479">Metal-binding</keyword>
<keyword id="KW-0540">Nuclease</keyword>
<keyword id="KW-1185">Reference proteome</keyword>
<protein>
    <recommendedName>
        <fullName evidence="1">Protein pelota homolog</fullName>
        <ecNumber evidence="1">3.1.-.-</ecNumber>
    </recommendedName>
</protein>
<comment type="function">
    <text evidence="1">May function in recognizing stalled ribosomes, interact with stem-loop structures in stalled mRNA molecules, and effect endonucleolytic cleavage of the mRNA. May play a role in the release non-functional ribosomes and degradation of damaged mRNAs. Has endoribonuclease activity.</text>
</comment>
<comment type="cofactor">
    <cofactor evidence="1">
        <name>a divalent metal cation</name>
        <dbReference type="ChEBI" id="CHEBI:60240"/>
    </cofactor>
</comment>
<comment type="subunit">
    <text evidence="1">Monomer.</text>
</comment>
<comment type="subcellular location">
    <subcellularLocation>
        <location evidence="1">Cytoplasm</location>
    </subcellularLocation>
</comment>
<comment type="domain">
    <text evidence="1">The N-terminal domain has the RNA-binding Sm fold. It harbors the endoribonuclease activity.</text>
</comment>
<comment type="similarity">
    <text evidence="1">Belongs to the eukaryotic release factor 1 family. Pelota subfamily.</text>
</comment>
<evidence type="ECO:0000255" key="1">
    <source>
        <dbReference type="HAMAP-Rule" id="MF_01853"/>
    </source>
</evidence>
<proteinExistence type="inferred from homology"/>
<sequence length="332" mass="37811">MKYEIDKKRLVIRVVPEREEDLYFIYLLIDKGDIIRGWTVREYKPDGVKEGERIKMYLAIKAEALEYHKFRGSLRVRGPVIEVQEGVEGVKGRRHTFDISIGREIEIEKNEDKPLEVVDEILNMAKNVMPRILLISIDDEEAAFAYITSIGVNVLHVVRNDAERSRGDSLLHDYLVTIGKIAEDLKRRLNPDKVVVTGPHIVVEQIGNYVRGDRVAQSVGGLAGIYEFMRAGLYDGLKTEMGIKAYERLMQLLATERNLVAIGLEEVEMAVAAGRVEILLIVDSYIKEDPHRAWDLIYKVYATRGKIYIIREDLEIGTSLKAMGGVASILRW</sequence>
<organism>
    <name type="scientific">Pyrobaculum aerophilum (strain ATCC 51768 / DSM 7523 / JCM 9630 / CIP 104966 / NBRC 100827 / IM2)</name>
    <dbReference type="NCBI Taxonomy" id="178306"/>
    <lineage>
        <taxon>Archaea</taxon>
        <taxon>Thermoproteota</taxon>
        <taxon>Thermoprotei</taxon>
        <taxon>Thermoproteales</taxon>
        <taxon>Thermoproteaceae</taxon>
        <taxon>Pyrobaculum</taxon>
    </lineage>
</organism>
<feature type="chain" id="PRO_0000361813" description="Protein pelota homolog">
    <location>
        <begin position="1"/>
        <end position="332"/>
    </location>
</feature>
<accession>Q8ZTE8</accession>
<dbReference type="EC" id="3.1.-.-" evidence="1"/>
<dbReference type="EMBL" id="AE009441">
    <property type="protein sequence ID" value="AAL64813.1"/>
    <property type="molecule type" value="Genomic_DNA"/>
</dbReference>
<dbReference type="RefSeq" id="WP_011009281.1">
    <property type="nucleotide sequence ID" value="NC_003364.1"/>
</dbReference>
<dbReference type="SMR" id="Q8ZTE8"/>
<dbReference type="FunCoup" id="Q8ZTE8">
    <property type="interactions" value="123"/>
</dbReference>
<dbReference type="STRING" id="178306.PAE3287"/>
<dbReference type="EnsemblBacteria" id="AAL64813">
    <property type="protein sequence ID" value="AAL64813"/>
    <property type="gene ID" value="PAE3287"/>
</dbReference>
<dbReference type="GeneID" id="1464001"/>
<dbReference type="KEGG" id="pai:PAE3287"/>
<dbReference type="PATRIC" id="fig|178306.9.peg.2475"/>
<dbReference type="eggNOG" id="arCOG01741">
    <property type="taxonomic scope" value="Archaea"/>
</dbReference>
<dbReference type="HOGENOM" id="CLU_023334_0_0_2"/>
<dbReference type="InParanoid" id="Q8ZTE8"/>
<dbReference type="Proteomes" id="UP000002439">
    <property type="component" value="Chromosome"/>
</dbReference>
<dbReference type="GO" id="GO:0005737">
    <property type="term" value="C:cytoplasm"/>
    <property type="evidence" value="ECO:0000318"/>
    <property type="project" value="GO_Central"/>
</dbReference>
<dbReference type="GO" id="GO:0004519">
    <property type="term" value="F:endonuclease activity"/>
    <property type="evidence" value="ECO:0007669"/>
    <property type="project" value="UniProtKB-UniRule"/>
</dbReference>
<dbReference type="GO" id="GO:0046872">
    <property type="term" value="F:metal ion binding"/>
    <property type="evidence" value="ECO:0007669"/>
    <property type="project" value="UniProtKB-UniRule"/>
</dbReference>
<dbReference type="GO" id="GO:0070651">
    <property type="term" value="P:nonfunctional rRNA decay"/>
    <property type="evidence" value="ECO:0000318"/>
    <property type="project" value="GO_Central"/>
</dbReference>
<dbReference type="GO" id="GO:0070966">
    <property type="term" value="P:nuclear-transcribed mRNA catabolic process, no-go decay"/>
    <property type="evidence" value="ECO:0000318"/>
    <property type="project" value="GO_Central"/>
</dbReference>
<dbReference type="GO" id="GO:0070481">
    <property type="term" value="P:nuclear-transcribed mRNA catabolic process, non-stop decay"/>
    <property type="evidence" value="ECO:0007669"/>
    <property type="project" value="InterPro"/>
</dbReference>
<dbReference type="GO" id="GO:0032790">
    <property type="term" value="P:ribosome disassembly"/>
    <property type="evidence" value="ECO:0000318"/>
    <property type="project" value="GO_Central"/>
</dbReference>
<dbReference type="GO" id="GO:0071025">
    <property type="term" value="P:RNA surveillance"/>
    <property type="evidence" value="ECO:0007669"/>
    <property type="project" value="InterPro"/>
</dbReference>
<dbReference type="Gene3D" id="3.30.1330.30">
    <property type="match status" value="1"/>
</dbReference>
<dbReference type="Gene3D" id="3.30.420.60">
    <property type="entry name" value="eRF1 domain 2"/>
    <property type="match status" value="1"/>
</dbReference>
<dbReference type="Gene3D" id="2.30.30.870">
    <property type="entry name" value="Pelota, domain A"/>
    <property type="match status" value="1"/>
</dbReference>
<dbReference type="HAMAP" id="MF_01853">
    <property type="entry name" value="PelO"/>
    <property type="match status" value="1"/>
</dbReference>
<dbReference type="InterPro" id="IPR042226">
    <property type="entry name" value="eFR1_2_sf"/>
</dbReference>
<dbReference type="InterPro" id="IPR005140">
    <property type="entry name" value="eRF1_1_Pelota"/>
</dbReference>
<dbReference type="InterPro" id="IPR005142">
    <property type="entry name" value="eRF1_3"/>
</dbReference>
<dbReference type="InterPro" id="IPR038069">
    <property type="entry name" value="Pelota/DOM34_N"/>
</dbReference>
<dbReference type="InterPro" id="IPR023521">
    <property type="entry name" value="Pelota_arc"/>
</dbReference>
<dbReference type="InterPro" id="IPR029064">
    <property type="entry name" value="Ribosomal_eL30-like_sf"/>
</dbReference>
<dbReference type="InterPro" id="IPR004405">
    <property type="entry name" value="Transl-rel_pelota"/>
</dbReference>
<dbReference type="PANTHER" id="PTHR10853">
    <property type="entry name" value="PELOTA"/>
    <property type="match status" value="1"/>
</dbReference>
<dbReference type="PANTHER" id="PTHR10853:SF0">
    <property type="entry name" value="PROTEIN PELOTA HOMOLOG"/>
    <property type="match status" value="1"/>
</dbReference>
<dbReference type="Pfam" id="PF03463">
    <property type="entry name" value="eRF1_1"/>
    <property type="match status" value="1"/>
</dbReference>
<dbReference type="Pfam" id="PF03465">
    <property type="entry name" value="eRF1_3"/>
    <property type="match status" value="1"/>
</dbReference>
<dbReference type="SMART" id="SM01194">
    <property type="entry name" value="eRF1_1"/>
    <property type="match status" value="1"/>
</dbReference>
<dbReference type="SUPFAM" id="SSF159065">
    <property type="entry name" value="Dom34/Pelota N-terminal domain-like"/>
    <property type="match status" value="1"/>
</dbReference>
<dbReference type="SUPFAM" id="SSF55315">
    <property type="entry name" value="L30e-like"/>
    <property type="match status" value="1"/>
</dbReference>
<dbReference type="SUPFAM" id="SSF53137">
    <property type="entry name" value="Translational machinery components"/>
    <property type="match status" value="1"/>
</dbReference>
<name>PELO_PYRAE</name>
<reference key="1">
    <citation type="journal article" date="2002" name="Proc. Natl. Acad. Sci. U.S.A.">
        <title>Genome sequence of the hyperthermophilic crenarchaeon Pyrobaculum aerophilum.</title>
        <authorList>
            <person name="Fitz-Gibbon S.T."/>
            <person name="Ladner H."/>
            <person name="Kim U.-J."/>
            <person name="Stetter K.O."/>
            <person name="Simon M.I."/>
            <person name="Miller J.H."/>
        </authorList>
    </citation>
    <scope>NUCLEOTIDE SEQUENCE [LARGE SCALE GENOMIC DNA]</scope>
    <source>
        <strain>ATCC 51768 / DSM 7523 / JCM 9630 / CIP 104966 / NBRC 100827 / IM2</strain>
    </source>
</reference>